<dbReference type="EC" id="2.4.2.21" evidence="1"/>
<dbReference type="EMBL" id="CP000563">
    <property type="protein sequence ID" value="ABN62841.1"/>
    <property type="molecule type" value="Genomic_DNA"/>
</dbReference>
<dbReference type="RefSeq" id="WP_011847602.1">
    <property type="nucleotide sequence ID" value="NC_009052.1"/>
</dbReference>
<dbReference type="SMR" id="A3D7X8"/>
<dbReference type="STRING" id="325240.Sbal_3364"/>
<dbReference type="KEGG" id="sbl:Sbal_3364"/>
<dbReference type="HOGENOM" id="CLU_002982_0_0_6"/>
<dbReference type="OrthoDB" id="9781491at2"/>
<dbReference type="UniPathway" id="UPA00061">
    <property type="reaction ID" value="UER00516"/>
</dbReference>
<dbReference type="Proteomes" id="UP000001557">
    <property type="component" value="Chromosome"/>
</dbReference>
<dbReference type="GO" id="GO:0008939">
    <property type="term" value="F:nicotinate-nucleotide-dimethylbenzimidazole phosphoribosyltransferase activity"/>
    <property type="evidence" value="ECO:0007669"/>
    <property type="project" value="UniProtKB-UniRule"/>
</dbReference>
<dbReference type="GO" id="GO:0009236">
    <property type="term" value="P:cobalamin biosynthetic process"/>
    <property type="evidence" value="ECO:0007669"/>
    <property type="project" value="UniProtKB-KW"/>
</dbReference>
<dbReference type="CDD" id="cd02439">
    <property type="entry name" value="DMB-PRT_CobT"/>
    <property type="match status" value="1"/>
</dbReference>
<dbReference type="FunFam" id="3.40.50.10210:FF:000001">
    <property type="entry name" value="Nicotinate-nucleotide--dimethylbenzimidazole phosphoribosyltransferase"/>
    <property type="match status" value="1"/>
</dbReference>
<dbReference type="Gene3D" id="1.10.1610.10">
    <property type="match status" value="1"/>
</dbReference>
<dbReference type="Gene3D" id="3.40.50.10210">
    <property type="match status" value="1"/>
</dbReference>
<dbReference type="HAMAP" id="MF_00230">
    <property type="entry name" value="CobT"/>
    <property type="match status" value="1"/>
</dbReference>
<dbReference type="InterPro" id="IPR003200">
    <property type="entry name" value="Nict_dMeBzImd_PRibTrfase"/>
</dbReference>
<dbReference type="InterPro" id="IPR017846">
    <property type="entry name" value="Nict_dMeBzImd_PRibTrfase_bact"/>
</dbReference>
<dbReference type="InterPro" id="IPR023195">
    <property type="entry name" value="Nict_dMeBzImd_PRibTrfase_N"/>
</dbReference>
<dbReference type="InterPro" id="IPR036087">
    <property type="entry name" value="Nict_dMeBzImd_PRibTrfase_sf"/>
</dbReference>
<dbReference type="NCBIfam" id="TIGR03160">
    <property type="entry name" value="cobT_DBIPRT"/>
    <property type="match status" value="1"/>
</dbReference>
<dbReference type="NCBIfam" id="NF000996">
    <property type="entry name" value="PRK00105.1"/>
    <property type="match status" value="1"/>
</dbReference>
<dbReference type="PANTHER" id="PTHR43463">
    <property type="entry name" value="NICOTINATE-NUCLEOTIDE--DIMETHYLBENZIMIDAZOLE PHOSPHORIBOSYLTRANSFERASE"/>
    <property type="match status" value="1"/>
</dbReference>
<dbReference type="PANTHER" id="PTHR43463:SF1">
    <property type="entry name" value="NICOTINATE-NUCLEOTIDE--DIMETHYLBENZIMIDAZOLE PHOSPHORIBOSYLTRANSFERASE"/>
    <property type="match status" value="1"/>
</dbReference>
<dbReference type="Pfam" id="PF02277">
    <property type="entry name" value="DBI_PRT"/>
    <property type="match status" value="1"/>
</dbReference>
<dbReference type="SUPFAM" id="SSF52733">
    <property type="entry name" value="Nicotinate mononucleotide:5,6-dimethylbenzimidazole phosphoribosyltransferase (CobT)"/>
    <property type="match status" value="1"/>
</dbReference>
<protein>
    <recommendedName>
        <fullName evidence="1">Nicotinate-nucleotide--dimethylbenzimidazole phosphoribosyltransferase</fullName>
        <shortName evidence="1">NN:DBI PRT</shortName>
        <ecNumber evidence="1">2.4.2.21</ecNumber>
    </recommendedName>
    <alternativeName>
        <fullName evidence="1">N(1)-alpha-phosphoribosyltransferase</fullName>
    </alternativeName>
</protein>
<organism>
    <name type="scientific">Shewanella baltica (strain OS155 / ATCC BAA-1091)</name>
    <dbReference type="NCBI Taxonomy" id="325240"/>
    <lineage>
        <taxon>Bacteria</taxon>
        <taxon>Pseudomonadati</taxon>
        <taxon>Pseudomonadota</taxon>
        <taxon>Gammaproteobacteria</taxon>
        <taxon>Alteromonadales</taxon>
        <taxon>Shewanellaceae</taxon>
        <taxon>Shewanella</taxon>
    </lineage>
</organism>
<reference key="1">
    <citation type="submission" date="2007-02" db="EMBL/GenBank/DDBJ databases">
        <title>Complete sequence of chromosome of Shewanella baltica OS155.</title>
        <authorList>
            <consortium name="US DOE Joint Genome Institute"/>
            <person name="Copeland A."/>
            <person name="Lucas S."/>
            <person name="Lapidus A."/>
            <person name="Barry K."/>
            <person name="Detter J.C."/>
            <person name="Glavina del Rio T."/>
            <person name="Hammon N."/>
            <person name="Israni S."/>
            <person name="Dalin E."/>
            <person name="Tice H."/>
            <person name="Pitluck S."/>
            <person name="Sims D.R."/>
            <person name="Brettin T."/>
            <person name="Bruce D."/>
            <person name="Han C."/>
            <person name="Tapia R."/>
            <person name="Brainard J."/>
            <person name="Schmutz J."/>
            <person name="Larimer F."/>
            <person name="Land M."/>
            <person name="Hauser L."/>
            <person name="Kyrpides N."/>
            <person name="Mikhailova N."/>
            <person name="Brettar I."/>
            <person name="Klappenbach J."/>
            <person name="Konstantinidis K."/>
            <person name="Rodrigues J."/>
            <person name="Tiedje J."/>
            <person name="Richardson P."/>
        </authorList>
    </citation>
    <scope>NUCLEOTIDE SEQUENCE [LARGE SCALE GENOMIC DNA]</scope>
    <source>
        <strain>OS155 / ATCC BAA-1091</strain>
    </source>
</reference>
<feature type="chain" id="PRO_1000021625" description="Nicotinate-nucleotide--dimethylbenzimidazole phosphoribosyltransferase">
    <location>
        <begin position="1"/>
        <end position="360"/>
    </location>
</feature>
<feature type="active site" description="Proton acceptor" evidence="1">
    <location>
        <position position="327"/>
    </location>
</feature>
<comment type="function">
    <text evidence="1">Catalyzes the synthesis of alpha-ribazole-5'-phosphate from nicotinate mononucleotide (NAMN) and 5,6-dimethylbenzimidazole (DMB).</text>
</comment>
<comment type="catalytic activity">
    <reaction evidence="1">
        <text>5,6-dimethylbenzimidazole + nicotinate beta-D-ribonucleotide = alpha-ribazole 5'-phosphate + nicotinate + H(+)</text>
        <dbReference type="Rhea" id="RHEA:11196"/>
        <dbReference type="ChEBI" id="CHEBI:15378"/>
        <dbReference type="ChEBI" id="CHEBI:15890"/>
        <dbReference type="ChEBI" id="CHEBI:32544"/>
        <dbReference type="ChEBI" id="CHEBI:57502"/>
        <dbReference type="ChEBI" id="CHEBI:57918"/>
        <dbReference type="EC" id="2.4.2.21"/>
    </reaction>
</comment>
<comment type="pathway">
    <text evidence="1">Nucleoside biosynthesis; alpha-ribazole biosynthesis; alpha-ribazole from 5,6-dimethylbenzimidazole: step 1/2.</text>
</comment>
<comment type="similarity">
    <text evidence="1">Belongs to the CobT family.</text>
</comment>
<sequence>MSQSAVSFQISPVSKTQDPLIQQKIDLKTKPPGALGQLESLALQIARVQATDSQQTDQPQNTVLKIVQPTMLVFAGDHGIAAEGVSIAPSEVTRQMVQNFAHGGAAINVFCRQVGFTLEVIDCGILTPVEGVEGIIDQRLGAGTGAIHLEPAMALETVDKGFAMARDLIERHHQAGCNLVAFGEMGIGNTSAAAAIMAAIMQLDVIDCVGRGTGINSETLERKLMLIELALLLHQSALTGPKSVLACLGGFEIVQMTGAMLAAAERKMLVVVDGFIATAAALVAVQIAPNVRDYLIFAHQSDEQGHKRMLEFLQAKPLLSLGLRLGEGTGAALALPLIQASVNFYNQMASFSDAGIEAVV</sequence>
<keyword id="KW-0169">Cobalamin biosynthesis</keyword>
<keyword id="KW-0328">Glycosyltransferase</keyword>
<keyword id="KW-1185">Reference proteome</keyword>
<keyword id="KW-0808">Transferase</keyword>
<name>COBT_SHEB5</name>
<proteinExistence type="inferred from homology"/>
<evidence type="ECO:0000255" key="1">
    <source>
        <dbReference type="HAMAP-Rule" id="MF_00230"/>
    </source>
</evidence>
<gene>
    <name evidence="1" type="primary">cobT</name>
    <name type="ordered locus">Sbal_3364</name>
</gene>
<accession>A3D7X8</accession>